<dbReference type="EMBL" id="U10927">
    <property type="protein sequence ID" value="AAA64643.1"/>
    <property type="molecule type" value="Genomic_DNA"/>
</dbReference>
<dbReference type="RefSeq" id="WP_115294900.1">
    <property type="nucleotide sequence ID" value="NZ_UGZL01000001.1"/>
</dbReference>
<dbReference type="SMR" id="P39853"/>
<dbReference type="UniPathway" id="UPA00934"/>
<dbReference type="GO" id="GO:0005886">
    <property type="term" value="C:plasma membrane"/>
    <property type="evidence" value="ECO:0007669"/>
    <property type="project" value="UniProtKB-SubCell"/>
</dbReference>
<dbReference type="GO" id="GO:0045227">
    <property type="term" value="P:capsule polysaccharide biosynthetic process"/>
    <property type="evidence" value="ECO:0007669"/>
    <property type="project" value="UniProtKB-UniPathway"/>
</dbReference>
<dbReference type="CDD" id="cd05237">
    <property type="entry name" value="UDP_invert_4-6DH_SDR_e"/>
    <property type="match status" value="1"/>
</dbReference>
<dbReference type="Gene3D" id="3.40.50.720">
    <property type="entry name" value="NAD(P)-binding Rossmann-like Domain"/>
    <property type="match status" value="2"/>
</dbReference>
<dbReference type="InterPro" id="IPR036291">
    <property type="entry name" value="NAD(P)-bd_dom_sf"/>
</dbReference>
<dbReference type="InterPro" id="IPR003869">
    <property type="entry name" value="Polysac_CapD-like"/>
</dbReference>
<dbReference type="InterPro" id="IPR051203">
    <property type="entry name" value="Polysaccharide_Synthase-Rel"/>
</dbReference>
<dbReference type="InterPro" id="IPR029063">
    <property type="entry name" value="SAM-dependent_MTases_sf"/>
</dbReference>
<dbReference type="PANTHER" id="PTHR43318:SF1">
    <property type="entry name" value="POLYSACCHARIDE BIOSYNTHESIS PROTEIN EPSC-RELATED"/>
    <property type="match status" value="1"/>
</dbReference>
<dbReference type="PANTHER" id="PTHR43318">
    <property type="entry name" value="UDP-N-ACETYLGLUCOSAMINE 4,6-DEHYDRATASE"/>
    <property type="match status" value="1"/>
</dbReference>
<dbReference type="Pfam" id="PF13727">
    <property type="entry name" value="CoA_binding_3"/>
    <property type="match status" value="1"/>
</dbReference>
<dbReference type="Pfam" id="PF02719">
    <property type="entry name" value="Polysacc_synt_2"/>
    <property type="match status" value="1"/>
</dbReference>
<dbReference type="SUPFAM" id="SSF51735">
    <property type="entry name" value="NAD(P)-binding Rossmann-fold domains"/>
    <property type="match status" value="1"/>
</dbReference>
<dbReference type="SUPFAM" id="SSF53335">
    <property type="entry name" value="S-adenosyl-L-methionine-dependent methyltransferases"/>
    <property type="match status" value="1"/>
</dbReference>
<evidence type="ECO:0000255" key="1"/>
<evidence type="ECO:0000305" key="2"/>
<gene>
    <name type="primary">capD</name>
</gene>
<keyword id="KW-0972">Capsule biogenesis/degradation</keyword>
<keyword id="KW-1003">Cell membrane</keyword>
<keyword id="KW-0270">Exopolysaccharide synthesis</keyword>
<keyword id="KW-0472">Membrane</keyword>
<keyword id="KW-0812">Transmembrane</keyword>
<keyword id="KW-1133">Transmembrane helix</keyword>
<accession>P39853</accession>
<proteinExistence type="inferred from homology"/>
<comment type="function">
    <text>Required for the biosynthesis of type 1 capsular polysaccharide.</text>
</comment>
<comment type="pathway">
    <text>Capsule biogenesis; capsule polysaccharide biosynthesis.</text>
</comment>
<comment type="subcellular location">
    <subcellularLocation>
        <location evidence="2">Cell membrane</location>
        <topology evidence="2">Multi-pass membrane protein</topology>
    </subcellularLocation>
</comment>
<comment type="similarity">
    <text evidence="2">Belongs to the polysaccharide synthase family.</text>
</comment>
<reference key="1">
    <citation type="journal article" date="1994" name="J. Bacteriol.">
        <title>Sequence analysis and molecular characterization of genes required for the biosynthesis of type 1 capsular polysaccharide in Staphylococcus aureus.</title>
        <authorList>
            <person name="Lin W.S."/>
            <person name="Cunneen T."/>
            <person name="Lee C.Y."/>
        </authorList>
    </citation>
    <scope>NUCLEOTIDE SEQUENCE [GENOMIC DNA]</scope>
    <source>
        <strain>ATCC 49951 / M / NCTC 10649</strain>
    </source>
</reference>
<feature type="chain" id="PRO_0000166445" description="Capsular polysaccharide biosynthesis protein CapD">
    <location>
        <begin position="1"/>
        <end position="599"/>
    </location>
</feature>
<feature type="transmembrane region" description="Helical" evidence="1">
    <location>
        <begin position="12"/>
        <end position="32"/>
    </location>
</feature>
<feature type="transmembrane region" description="Helical" evidence="1">
    <location>
        <begin position="41"/>
        <end position="61"/>
    </location>
</feature>
<feature type="transmembrane region" description="Helical" evidence="1">
    <location>
        <begin position="79"/>
        <end position="99"/>
    </location>
</feature>
<feature type="transmembrane region" description="Helical" evidence="1">
    <location>
        <begin position="102"/>
        <end position="122"/>
    </location>
</feature>
<protein>
    <recommendedName>
        <fullName>Capsular polysaccharide biosynthesis protein CapD</fullName>
    </recommendedName>
</protein>
<sequence length="599" mass="67562">MTSISAKLRFLILIIIDSFIVTFSVFLGYAILEPYFKGYSIDLLVLSSVILLVSHHIFAYVFNLYHRAWEYASVSELMSVLKAVTSSIVVTLLLVSLLISESPFLRLYFITWMMHLLLIGGSRLFWRVYRRYFIDNAVEKKATLVVGAGQGGSVLIREMLRSQDMRMQPVLAVDDDKNKQKMTITERVKVQGYVEDIPELVKKFRIKKIIIAIPTLSQKRLNEINKICNIEGVELFKMPNIEDVLSGELEVNNLKKVEVEDLLGRDPVELDMALISRELTNKTILVTGAGGSIGSEICRQVSKFDPQKIILLGHGENSIYSIHQELSKTYGNRIEFVPVIADVQNKTRILEVMNEFKPYAVYHAAAHKHVPLMEYNPHEAIRNNILGTKNVAESAKEGEVSKFVMISTDKAVNPSNVMGATKRIAEMVIQSLNEDNSKTSFVAVRFGNVLGSRGSVIPLFKNQIESGGPVTVTHPEMTRYFMTIPEASRLVLQAGALAQGGEVFVLDMGKPVKIVDLAKNLIRLSGKKEEDIGIEFSGIRPGEKLYEELLNKNEIHPQQVYEKIYRGKVDHYIKTEVDLIVEDLINNFSKEKLLKIANR</sequence>
<name>CAPD_STAAU</name>
<organism>
    <name type="scientific">Staphylococcus aureus</name>
    <dbReference type="NCBI Taxonomy" id="1280"/>
    <lineage>
        <taxon>Bacteria</taxon>
        <taxon>Bacillati</taxon>
        <taxon>Bacillota</taxon>
        <taxon>Bacilli</taxon>
        <taxon>Bacillales</taxon>
        <taxon>Staphylococcaceae</taxon>
        <taxon>Staphylococcus</taxon>
    </lineage>
</organism>